<organism>
    <name type="scientific">Burkholderia ambifaria (strain MC40-6)</name>
    <dbReference type="NCBI Taxonomy" id="398577"/>
    <lineage>
        <taxon>Bacteria</taxon>
        <taxon>Pseudomonadati</taxon>
        <taxon>Pseudomonadota</taxon>
        <taxon>Betaproteobacteria</taxon>
        <taxon>Burkholderiales</taxon>
        <taxon>Burkholderiaceae</taxon>
        <taxon>Burkholderia</taxon>
        <taxon>Burkholderia cepacia complex</taxon>
    </lineage>
</organism>
<reference key="1">
    <citation type="submission" date="2008-04" db="EMBL/GenBank/DDBJ databases">
        <title>Complete sequence of chromosome 1 of Burkholderia ambifaria MC40-6.</title>
        <authorList>
            <person name="Copeland A."/>
            <person name="Lucas S."/>
            <person name="Lapidus A."/>
            <person name="Glavina del Rio T."/>
            <person name="Dalin E."/>
            <person name="Tice H."/>
            <person name="Pitluck S."/>
            <person name="Chain P."/>
            <person name="Malfatti S."/>
            <person name="Shin M."/>
            <person name="Vergez L."/>
            <person name="Lang D."/>
            <person name="Schmutz J."/>
            <person name="Larimer F."/>
            <person name="Land M."/>
            <person name="Hauser L."/>
            <person name="Kyrpides N."/>
            <person name="Lykidis A."/>
            <person name="Ramette A."/>
            <person name="Konstantinidis K."/>
            <person name="Tiedje J."/>
            <person name="Richardson P."/>
        </authorList>
    </citation>
    <scope>NUCLEOTIDE SEQUENCE [LARGE SCALE GENOMIC DNA]</scope>
    <source>
        <strain>MC40-6</strain>
    </source>
</reference>
<keyword id="KW-0963">Cytoplasm</keyword>
<keyword id="KW-0444">Lipid biosynthesis</keyword>
<keyword id="KW-0443">Lipid metabolism</keyword>
<keyword id="KW-0520">NAD</keyword>
<keyword id="KW-0521">NADP</keyword>
<keyword id="KW-0547">Nucleotide-binding</keyword>
<keyword id="KW-0560">Oxidoreductase</keyword>
<keyword id="KW-0594">Phospholipid biosynthesis</keyword>
<keyword id="KW-1208">Phospholipid metabolism</keyword>
<proteinExistence type="inferred from homology"/>
<accession>B1YNA2</accession>
<gene>
    <name evidence="1" type="primary">gpsA</name>
    <name type="ordered locus">BamMC406_2770</name>
</gene>
<name>GPDA_BURA4</name>
<dbReference type="EC" id="1.1.1.94" evidence="1"/>
<dbReference type="EMBL" id="CP001025">
    <property type="protein sequence ID" value="ACB65247.1"/>
    <property type="molecule type" value="Genomic_DNA"/>
</dbReference>
<dbReference type="RefSeq" id="WP_006752067.1">
    <property type="nucleotide sequence ID" value="NC_010551.1"/>
</dbReference>
<dbReference type="SMR" id="B1YNA2"/>
<dbReference type="KEGG" id="bac:BamMC406_2770"/>
<dbReference type="HOGENOM" id="CLU_033449_0_2_4"/>
<dbReference type="OrthoDB" id="9812273at2"/>
<dbReference type="UniPathway" id="UPA00940"/>
<dbReference type="Proteomes" id="UP000001680">
    <property type="component" value="Chromosome 1"/>
</dbReference>
<dbReference type="GO" id="GO:0005829">
    <property type="term" value="C:cytosol"/>
    <property type="evidence" value="ECO:0007669"/>
    <property type="project" value="TreeGrafter"/>
</dbReference>
<dbReference type="GO" id="GO:0047952">
    <property type="term" value="F:glycerol-3-phosphate dehydrogenase [NAD(P)+] activity"/>
    <property type="evidence" value="ECO:0007669"/>
    <property type="project" value="UniProtKB-UniRule"/>
</dbReference>
<dbReference type="GO" id="GO:0051287">
    <property type="term" value="F:NAD binding"/>
    <property type="evidence" value="ECO:0007669"/>
    <property type="project" value="InterPro"/>
</dbReference>
<dbReference type="GO" id="GO:0005975">
    <property type="term" value="P:carbohydrate metabolic process"/>
    <property type="evidence" value="ECO:0007669"/>
    <property type="project" value="InterPro"/>
</dbReference>
<dbReference type="GO" id="GO:0046167">
    <property type="term" value="P:glycerol-3-phosphate biosynthetic process"/>
    <property type="evidence" value="ECO:0007669"/>
    <property type="project" value="UniProtKB-UniRule"/>
</dbReference>
<dbReference type="GO" id="GO:0046168">
    <property type="term" value="P:glycerol-3-phosphate catabolic process"/>
    <property type="evidence" value="ECO:0007669"/>
    <property type="project" value="InterPro"/>
</dbReference>
<dbReference type="GO" id="GO:0006650">
    <property type="term" value="P:glycerophospholipid metabolic process"/>
    <property type="evidence" value="ECO:0007669"/>
    <property type="project" value="UniProtKB-UniRule"/>
</dbReference>
<dbReference type="GO" id="GO:0008654">
    <property type="term" value="P:phospholipid biosynthetic process"/>
    <property type="evidence" value="ECO:0007669"/>
    <property type="project" value="UniProtKB-KW"/>
</dbReference>
<dbReference type="FunFam" id="1.10.1040.10:FF:000001">
    <property type="entry name" value="Glycerol-3-phosphate dehydrogenase [NAD(P)+]"/>
    <property type="match status" value="1"/>
</dbReference>
<dbReference type="FunFam" id="3.40.50.720:FF:000019">
    <property type="entry name" value="Glycerol-3-phosphate dehydrogenase [NAD(P)+]"/>
    <property type="match status" value="1"/>
</dbReference>
<dbReference type="Gene3D" id="1.10.1040.10">
    <property type="entry name" value="N-(1-d-carboxylethyl)-l-norvaline Dehydrogenase, domain 2"/>
    <property type="match status" value="1"/>
</dbReference>
<dbReference type="Gene3D" id="3.40.50.720">
    <property type="entry name" value="NAD(P)-binding Rossmann-like Domain"/>
    <property type="match status" value="1"/>
</dbReference>
<dbReference type="HAMAP" id="MF_00394">
    <property type="entry name" value="NAD_Glyc3P_dehydrog"/>
    <property type="match status" value="1"/>
</dbReference>
<dbReference type="InterPro" id="IPR008927">
    <property type="entry name" value="6-PGluconate_DH-like_C_sf"/>
</dbReference>
<dbReference type="InterPro" id="IPR013328">
    <property type="entry name" value="6PGD_dom2"/>
</dbReference>
<dbReference type="InterPro" id="IPR006168">
    <property type="entry name" value="G3P_DH_NAD-dep"/>
</dbReference>
<dbReference type="InterPro" id="IPR006109">
    <property type="entry name" value="G3P_DH_NAD-dep_C"/>
</dbReference>
<dbReference type="InterPro" id="IPR011128">
    <property type="entry name" value="G3P_DH_NAD-dep_N"/>
</dbReference>
<dbReference type="InterPro" id="IPR036291">
    <property type="entry name" value="NAD(P)-bd_dom_sf"/>
</dbReference>
<dbReference type="NCBIfam" id="NF000940">
    <property type="entry name" value="PRK00094.1-2"/>
    <property type="match status" value="1"/>
</dbReference>
<dbReference type="NCBIfam" id="NF000942">
    <property type="entry name" value="PRK00094.1-4"/>
    <property type="match status" value="1"/>
</dbReference>
<dbReference type="PANTHER" id="PTHR11728">
    <property type="entry name" value="GLYCEROL-3-PHOSPHATE DEHYDROGENASE"/>
    <property type="match status" value="1"/>
</dbReference>
<dbReference type="PANTHER" id="PTHR11728:SF1">
    <property type="entry name" value="GLYCEROL-3-PHOSPHATE DEHYDROGENASE [NAD(+)] 2, CHLOROPLASTIC"/>
    <property type="match status" value="1"/>
</dbReference>
<dbReference type="Pfam" id="PF07479">
    <property type="entry name" value="NAD_Gly3P_dh_C"/>
    <property type="match status" value="1"/>
</dbReference>
<dbReference type="Pfam" id="PF01210">
    <property type="entry name" value="NAD_Gly3P_dh_N"/>
    <property type="match status" value="1"/>
</dbReference>
<dbReference type="PIRSF" id="PIRSF000114">
    <property type="entry name" value="Glycerol-3-P_dh"/>
    <property type="match status" value="1"/>
</dbReference>
<dbReference type="PRINTS" id="PR00077">
    <property type="entry name" value="GPDHDRGNASE"/>
</dbReference>
<dbReference type="SUPFAM" id="SSF48179">
    <property type="entry name" value="6-phosphogluconate dehydrogenase C-terminal domain-like"/>
    <property type="match status" value="1"/>
</dbReference>
<dbReference type="SUPFAM" id="SSF51735">
    <property type="entry name" value="NAD(P)-binding Rossmann-fold domains"/>
    <property type="match status" value="1"/>
</dbReference>
<dbReference type="PROSITE" id="PS00957">
    <property type="entry name" value="NAD_G3PDH"/>
    <property type="match status" value="1"/>
</dbReference>
<feature type="chain" id="PRO_1000123124" description="Glycerol-3-phosphate dehydrogenase [NAD(P)+]">
    <location>
        <begin position="1"/>
        <end position="332"/>
    </location>
</feature>
<feature type="active site" description="Proton acceptor" evidence="1">
    <location>
        <position position="192"/>
    </location>
</feature>
<feature type="binding site" evidence="1">
    <location>
        <position position="11"/>
    </location>
    <ligand>
        <name>NADPH</name>
        <dbReference type="ChEBI" id="CHEBI:57783"/>
    </ligand>
</feature>
<feature type="binding site" evidence="1">
    <location>
        <position position="30"/>
    </location>
    <ligand>
        <name>NADPH</name>
        <dbReference type="ChEBI" id="CHEBI:57783"/>
    </ligand>
</feature>
<feature type="binding site" evidence="1">
    <location>
        <position position="108"/>
    </location>
    <ligand>
        <name>NADPH</name>
        <dbReference type="ChEBI" id="CHEBI:57783"/>
    </ligand>
</feature>
<feature type="binding site" evidence="1">
    <location>
        <position position="108"/>
    </location>
    <ligand>
        <name>sn-glycerol 3-phosphate</name>
        <dbReference type="ChEBI" id="CHEBI:57597"/>
    </ligand>
</feature>
<feature type="binding site" evidence="1">
    <location>
        <position position="137"/>
    </location>
    <ligand>
        <name>sn-glycerol 3-phosphate</name>
        <dbReference type="ChEBI" id="CHEBI:57597"/>
    </ligand>
</feature>
<feature type="binding site" evidence="1">
    <location>
        <position position="139"/>
    </location>
    <ligand>
        <name>sn-glycerol 3-phosphate</name>
        <dbReference type="ChEBI" id="CHEBI:57597"/>
    </ligand>
</feature>
<feature type="binding site" evidence="1">
    <location>
        <position position="141"/>
    </location>
    <ligand>
        <name>NADPH</name>
        <dbReference type="ChEBI" id="CHEBI:57783"/>
    </ligand>
</feature>
<feature type="binding site" evidence="1">
    <location>
        <position position="192"/>
    </location>
    <ligand>
        <name>sn-glycerol 3-phosphate</name>
        <dbReference type="ChEBI" id="CHEBI:57597"/>
    </ligand>
</feature>
<feature type="binding site" evidence="1">
    <location>
        <position position="245"/>
    </location>
    <ligand>
        <name>sn-glycerol 3-phosphate</name>
        <dbReference type="ChEBI" id="CHEBI:57597"/>
    </ligand>
</feature>
<feature type="binding site" evidence="1">
    <location>
        <position position="255"/>
    </location>
    <ligand>
        <name>sn-glycerol 3-phosphate</name>
        <dbReference type="ChEBI" id="CHEBI:57597"/>
    </ligand>
</feature>
<feature type="binding site" evidence="1">
    <location>
        <position position="256"/>
    </location>
    <ligand>
        <name>NADPH</name>
        <dbReference type="ChEBI" id="CHEBI:57783"/>
    </ligand>
</feature>
<feature type="binding site" evidence="1">
    <location>
        <position position="256"/>
    </location>
    <ligand>
        <name>sn-glycerol 3-phosphate</name>
        <dbReference type="ChEBI" id="CHEBI:57597"/>
    </ligand>
</feature>
<feature type="binding site" evidence="1">
    <location>
        <position position="257"/>
    </location>
    <ligand>
        <name>sn-glycerol 3-phosphate</name>
        <dbReference type="ChEBI" id="CHEBI:57597"/>
    </ligand>
</feature>
<feature type="binding site" evidence="1">
    <location>
        <position position="280"/>
    </location>
    <ligand>
        <name>NADPH</name>
        <dbReference type="ChEBI" id="CHEBI:57783"/>
    </ligand>
</feature>
<feature type="binding site" evidence="1">
    <location>
        <position position="282"/>
    </location>
    <ligand>
        <name>NADPH</name>
        <dbReference type="ChEBI" id="CHEBI:57783"/>
    </ligand>
</feature>
<evidence type="ECO:0000255" key="1">
    <source>
        <dbReference type="HAMAP-Rule" id="MF_00394"/>
    </source>
</evidence>
<sequence length="332" mass="33877">MKVAVLGAGAWGTALAGHLAARHDTLLWARDAALIAGLQARHENSRYLDGIALPDALRYDADLGAALAHGAADDALCVIAAPVAGLRTLFGAMRDAGCVPAHVVWVCKGFEADTHLLPHQVIAAELPGQHSNGVLSGPSFAREVGLALPVALTVASTSAECRERTLAAFHHGAMRIYTGDDVVGVEVGGAVKNVLAIATGIADGLGLGLNARAALVTRGLAEMSRLGVALGGRAETFTGLTGLGDLILTATGDLSRNRTVGLQLAAGRSLNDILGALGHVAEGVRCAQAVLALARAQSIEMPITEAVCGVLFDGVAPRDAVSGLLRRDARAE</sequence>
<protein>
    <recommendedName>
        <fullName evidence="1">Glycerol-3-phosphate dehydrogenase [NAD(P)+]</fullName>
        <ecNumber evidence="1">1.1.1.94</ecNumber>
    </recommendedName>
    <alternativeName>
        <fullName evidence="1">NAD(P)(+)-dependent glycerol-3-phosphate dehydrogenase</fullName>
    </alternativeName>
    <alternativeName>
        <fullName evidence="1">NAD(P)H-dependent dihydroxyacetone-phosphate reductase</fullName>
    </alternativeName>
</protein>
<comment type="function">
    <text evidence="1">Catalyzes the reduction of the glycolytic intermediate dihydroxyacetone phosphate (DHAP) to sn-glycerol 3-phosphate (G3P), the key precursor for phospholipid synthesis.</text>
</comment>
<comment type="catalytic activity">
    <reaction evidence="1">
        <text>sn-glycerol 3-phosphate + NAD(+) = dihydroxyacetone phosphate + NADH + H(+)</text>
        <dbReference type="Rhea" id="RHEA:11092"/>
        <dbReference type="ChEBI" id="CHEBI:15378"/>
        <dbReference type="ChEBI" id="CHEBI:57540"/>
        <dbReference type="ChEBI" id="CHEBI:57597"/>
        <dbReference type="ChEBI" id="CHEBI:57642"/>
        <dbReference type="ChEBI" id="CHEBI:57945"/>
        <dbReference type="EC" id="1.1.1.94"/>
    </reaction>
    <physiologicalReaction direction="right-to-left" evidence="1">
        <dbReference type="Rhea" id="RHEA:11094"/>
    </physiologicalReaction>
</comment>
<comment type="catalytic activity">
    <reaction evidence="1">
        <text>sn-glycerol 3-phosphate + NADP(+) = dihydroxyacetone phosphate + NADPH + H(+)</text>
        <dbReference type="Rhea" id="RHEA:11096"/>
        <dbReference type="ChEBI" id="CHEBI:15378"/>
        <dbReference type="ChEBI" id="CHEBI:57597"/>
        <dbReference type="ChEBI" id="CHEBI:57642"/>
        <dbReference type="ChEBI" id="CHEBI:57783"/>
        <dbReference type="ChEBI" id="CHEBI:58349"/>
        <dbReference type="EC" id="1.1.1.94"/>
    </reaction>
    <physiologicalReaction direction="right-to-left" evidence="1">
        <dbReference type="Rhea" id="RHEA:11098"/>
    </physiologicalReaction>
</comment>
<comment type="pathway">
    <text evidence="1">Membrane lipid metabolism; glycerophospholipid metabolism.</text>
</comment>
<comment type="subcellular location">
    <subcellularLocation>
        <location evidence="1">Cytoplasm</location>
    </subcellularLocation>
</comment>
<comment type="similarity">
    <text evidence="1">Belongs to the NAD-dependent glycerol-3-phosphate dehydrogenase family.</text>
</comment>